<keyword id="KW-0687">Ribonucleoprotein</keyword>
<keyword id="KW-0689">Ribosomal protein</keyword>
<keyword id="KW-0694">RNA-binding</keyword>
<keyword id="KW-0699">rRNA-binding</keyword>
<sequence length="122" mass="13237">MIQMQTTLDVADNTGARAVMCIKVLGGSKRRYAGIGDIIKVSVKDAAPRGRVKKGEIYNAVVVRTAKGVRRKDGSLIRFGGNAAVLLNAKLEPIGTRIFGPVTRELRTERFMKIVSLAPEVL</sequence>
<proteinExistence type="inferred from homology"/>
<gene>
    <name evidence="1" type="primary">rplN</name>
    <name type="ordered locus">Bpet4940</name>
</gene>
<protein>
    <recommendedName>
        <fullName evidence="1">Large ribosomal subunit protein uL14</fullName>
    </recommendedName>
    <alternativeName>
        <fullName evidence="2">50S ribosomal protein L14</fullName>
    </alternativeName>
</protein>
<name>RL14_BORPD</name>
<feature type="chain" id="PRO_1000144229" description="Large ribosomal subunit protein uL14">
    <location>
        <begin position="1"/>
        <end position="122"/>
    </location>
</feature>
<reference key="1">
    <citation type="journal article" date="2008" name="BMC Genomics">
        <title>The missing link: Bordetella petrii is endowed with both the metabolic versatility of environmental bacteria and virulence traits of pathogenic Bordetellae.</title>
        <authorList>
            <person name="Gross R."/>
            <person name="Guzman C.A."/>
            <person name="Sebaihia M."/>
            <person name="Martin dos Santos V.A.P."/>
            <person name="Pieper D.H."/>
            <person name="Koebnik R."/>
            <person name="Lechner M."/>
            <person name="Bartels D."/>
            <person name="Buhrmester J."/>
            <person name="Choudhuri J.V."/>
            <person name="Ebensen T."/>
            <person name="Gaigalat L."/>
            <person name="Herrmann S."/>
            <person name="Khachane A.N."/>
            <person name="Larisch C."/>
            <person name="Link S."/>
            <person name="Linke B."/>
            <person name="Meyer F."/>
            <person name="Mormann S."/>
            <person name="Nakunst D."/>
            <person name="Rueckert C."/>
            <person name="Schneiker-Bekel S."/>
            <person name="Schulze K."/>
            <person name="Voerholter F.-J."/>
            <person name="Yevsa T."/>
            <person name="Engle J.T."/>
            <person name="Goldman W.E."/>
            <person name="Puehler A."/>
            <person name="Goebel U.B."/>
            <person name="Goesmann A."/>
            <person name="Bloecker H."/>
            <person name="Kaiser O."/>
            <person name="Martinez-Arias R."/>
        </authorList>
    </citation>
    <scope>NUCLEOTIDE SEQUENCE [LARGE SCALE GENOMIC DNA]</scope>
    <source>
        <strain>ATCC BAA-461 / DSM 12804 / CCUG 43448</strain>
    </source>
</reference>
<dbReference type="EMBL" id="AM902716">
    <property type="protein sequence ID" value="CAP45292.1"/>
    <property type="molecule type" value="Genomic_DNA"/>
</dbReference>
<dbReference type="SMR" id="A9IHU2"/>
<dbReference type="STRING" id="94624.Bpet4940"/>
<dbReference type="KEGG" id="bpt:Bpet4940"/>
<dbReference type="eggNOG" id="COG0093">
    <property type="taxonomic scope" value="Bacteria"/>
</dbReference>
<dbReference type="Proteomes" id="UP000001225">
    <property type="component" value="Chromosome"/>
</dbReference>
<dbReference type="GO" id="GO:0022625">
    <property type="term" value="C:cytosolic large ribosomal subunit"/>
    <property type="evidence" value="ECO:0007669"/>
    <property type="project" value="TreeGrafter"/>
</dbReference>
<dbReference type="GO" id="GO:0070180">
    <property type="term" value="F:large ribosomal subunit rRNA binding"/>
    <property type="evidence" value="ECO:0007669"/>
    <property type="project" value="TreeGrafter"/>
</dbReference>
<dbReference type="GO" id="GO:0003735">
    <property type="term" value="F:structural constituent of ribosome"/>
    <property type="evidence" value="ECO:0007669"/>
    <property type="project" value="InterPro"/>
</dbReference>
<dbReference type="GO" id="GO:0006412">
    <property type="term" value="P:translation"/>
    <property type="evidence" value="ECO:0007669"/>
    <property type="project" value="UniProtKB-UniRule"/>
</dbReference>
<dbReference type="CDD" id="cd00337">
    <property type="entry name" value="Ribosomal_uL14"/>
    <property type="match status" value="1"/>
</dbReference>
<dbReference type="FunFam" id="2.40.150.20:FF:000001">
    <property type="entry name" value="50S ribosomal protein L14"/>
    <property type="match status" value="1"/>
</dbReference>
<dbReference type="Gene3D" id="2.40.150.20">
    <property type="entry name" value="Ribosomal protein L14"/>
    <property type="match status" value="1"/>
</dbReference>
<dbReference type="HAMAP" id="MF_01367">
    <property type="entry name" value="Ribosomal_uL14"/>
    <property type="match status" value="1"/>
</dbReference>
<dbReference type="InterPro" id="IPR000218">
    <property type="entry name" value="Ribosomal_uL14"/>
</dbReference>
<dbReference type="InterPro" id="IPR005745">
    <property type="entry name" value="Ribosomal_uL14_bac-type"/>
</dbReference>
<dbReference type="InterPro" id="IPR019972">
    <property type="entry name" value="Ribosomal_uL14_CS"/>
</dbReference>
<dbReference type="InterPro" id="IPR036853">
    <property type="entry name" value="Ribosomal_uL14_sf"/>
</dbReference>
<dbReference type="NCBIfam" id="TIGR01067">
    <property type="entry name" value="rplN_bact"/>
    <property type="match status" value="1"/>
</dbReference>
<dbReference type="PANTHER" id="PTHR11761">
    <property type="entry name" value="50S/60S RIBOSOMAL PROTEIN L14/L23"/>
    <property type="match status" value="1"/>
</dbReference>
<dbReference type="PANTHER" id="PTHR11761:SF3">
    <property type="entry name" value="LARGE RIBOSOMAL SUBUNIT PROTEIN UL14M"/>
    <property type="match status" value="1"/>
</dbReference>
<dbReference type="Pfam" id="PF00238">
    <property type="entry name" value="Ribosomal_L14"/>
    <property type="match status" value="1"/>
</dbReference>
<dbReference type="SMART" id="SM01374">
    <property type="entry name" value="Ribosomal_L14"/>
    <property type="match status" value="1"/>
</dbReference>
<dbReference type="SUPFAM" id="SSF50193">
    <property type="entry name" value="Ribosomal protein L14"/>
    <property type="match status" value="1"/>
</dbReference>
<dbReference type="PROSITE" id="PS00049">
    <property type="entry name" value="RIBOSOMAL_L14"/>
    <property type="match status" value="1"/>
</dbReference>
<accession>A9IHU2</accession>
<organism>
    <name type="scientific">Bordetella petrii (strain ATCC BAA-461 / DSM 12804 / CCUG 43448)</name>
    <dbReference type="NCBI Taxonomy" id="340100"/>
    <lineage>
        <taxon>Bacteria</taxon>
        <taxon>Pseudomonadati</taxon>
        <taxon>Pseudomonadota</taxon>
        <taxon>Betaproteobacteria</taxon>
        <taxon>Burkholderiales</taxon>
        <taxon>Alcaligenaceae</taxon>
        <taxon>Bordetella</taxon>
    </lineage>
</organism>
<comment type="function">
    <text evidence="1">Binds to 23S rRNA. Forms part of two intersubunit bridges in the 70S ribosome.</text>
</comment>
<comment type="subunit">
    <text evidence="1">Part of the 50S ribosomal subunit. Forms a cluster with proteins L3 and L19. In the 70S ribosome, L14 and L19 interact and together make contacts with the 16S rRNA in bridges B5 and B8.</text>
</comment>
<comment type="similarity">
    <text evidence="1">Belongs to the universal ribosomal protein uL14 family.</text>
</comment>
<evidence type="ECO:0000255" key="1">
    <source>
        <dbReference type="HAMAP-Rule" id="MF_01367"/>
    </source>
</evidence>
<evidence type="ECO:0000305" key="2"/>